<keyword id="KW-1185">Reference proteome</keyword>
<keyword id="KW-0732">Signal</keyword>
<sequence>MVRRALRLAAGTASLAAGTWLLRALHGTPAALGADAASIRAVSEQSPNYRDGAFVNLDPASMFTLDREELRLIVWELVARHSASRPAAPIPLASPNIYRGDASRLAVSWFGHSTALLEIDGYRVLTDPVWSDRCSPSDVVGPQRLHPPPVQLAALPAVDAVVISHDHYDHLDIDTVVALVGMQRAPFLVPLGVGAHLRSWGVPQDRIVELDWNQSAQVDELTVVCVPARHFSGRFLSRNTTLWASWAFVGPNHRAYFGGDTGYTKSFTQIGADHGPFDLTLLPIGAYNTAWPDIHMNPEEAVRAHLDVTDSGSGMLVPVHWGTFRLAPHPWGEPVERLLAAAEPEHVTVAVPLPGQRVDPTGPMRLHPWWRL</sequence>
<gene>
    <name type="ordered locus">MT0929</name>
</gene>
<dbReference type="EMBL" id="AE000516">
    <property type="protein sequence ID" value="AAK45176.1"/>
    <property type="molecule type" value="Genomic_DNA"/>
</dbReference>
<dbReference type="PIR" id="G70783">
    <property type="entry name" value="G70783"/>
</dbReference>
<dbReference type="RefSeq" id="WP_003404705.1">
    <property type="nucleotide sequence ID" value="NZ_KK341227.1"/>
</dbReference>
<dbReference type="SMR" id="P9WKP2"/>
<dbReference type="KEGG" id="mtc:MT0929"/>
<dbReference type="PATRIC" id="fig|83331.31.peg.998"/>
<dbReference type="HOGENOM" id="CLU_020884_0_0_11"/>
<dbReference type="Proteomes" id="UP000001020">
    <property type="component" value="Chromosome"/>
</dbReference>
<dbReference type="GO" id="GO:0005737">
    <property type="term" value="C:cytoplasm"/>
    <property type="evidence" value="ECO:0007669"/>
    <property type="project" value="TreeGrafter"/>
</dbReference>
<dbReference type="GO" id="GO:0070290">
    <property type="term" value="F:N-acylphosphatidylethanolamine-specific phospholipase D activity"/>
    <property type="evidence" value="ECO:0007669"/>
    <property type="project" value="InterPro"/>
</dbReference>
<dbReference type="GO" id="GO:0008270">
    <property type="term" value="F:zinc ion binding"/>
    <property type="evidence" value="ECO:0007669"/>
    <property type="project" value="InterPro"/>
</dbReference>
<dbReference type="Gene3D" id="3.60.15.10">
    <property type="entry name" value="Ribonuclease Z/Hydroxyacylglutathione hydrolase-like"/>
    <property type="match status" value="1"/>
</dbReference>
<dbReference type="InterPro" id="IPR001279">
    <property type="entry name" value="Metallo-B-lactamas"/>
</dbReference>
<dbReference type="InterPro" id="IPR024884">
    <property type="entry name" value="NAPE-PLD"/>
</dbReference>
<dbReference type="InterPro" id="IPR036866">
    <property type="entry name" value="RibonucZ/Hydroxyglut_hydro"/>
</dbReference>
<dbReference type="PANTHER" id="PTHR15032">
    <property type="entry name" value="N-ACYL-PHOSPHATIDYLETHANOLAMINE-HYDROLYZING PHOSPHOLIPASE D"/>
    <property type="match status" value="1"/>
</dbReference>
<dbReference type="PANTHER" id="PTHR15032:SF4">
    <property type="entry name" value="N-ACYL-PHOSPHATIDYLETHANOLAMINE-HYDROLYZING PHOSPHOLIPASE D"/>
    <property type="match status" value="1"/>
</dbReference>
<dbReference type="Pfam" id="PF12706">
    <property type="entry name" value="Lactamase_B_2"/>
    <property type="match status" value="1"/>
</dbReference>
<dbReference type="PIRSF" id="PIRSF038896">
    <property type="entry name" value="NAPE-PLD"/>
    <property type="match status" value="1"/>
</dbReference>
<dbReference type="SUPFAM" id="SSF56281">
    <property type="entry name" value="Metallo-hydrolase/oxidoreductase"/>
    <property type="match status" value="1"/>
</dbReference>
<name>Y906_MYCTO</name>
<reference key="1">
    <citation type="journal article" date="2002" name="J. Bacteriol.">
        <title>Whole-genome comparison of Mycobacterium tuberculosis clinical and laboratory strains.</title>
        <authorList>
            <person name="Fleischmann R.D."/>
            <person name="Alland D."/>
            <person name="Eisen J.A."/>
            <person name="Carpenter L."/>
            <person name="White O."/>
            <person name="Peterson J.D."/>
            <person name="DeBoy R.T."/>
            <person name="Dodson R.J."/>
            <person name="Gwinn M.L."/>
            <person name="Haft D.H."/>
            <person name="Hickey E.K."/>
            <person name="Kolonay J.F."/>
            <person name="Nelson W.C."/>
            <person name="Umayam L.A."/>
            <person name="Ermolaeva M.D."/>
            <person name="Salzberg S.L."/>
            <person name="Delcher A."/>
            <person name="Utterback T.R."/>
            <person name="Weidman J.F."/>
            <person name="Khouri H.M."/>
            <person name="Gill J."/>
            <person name="Mikula A."/>
            <person name="Bishai W."/>
            <person name="Jacobs W.R. Jr."/>
            <person name="Venter J.C."/>
            <person name="Fraser C.M."/>
        </authorList>
    </citation>
    <scope>NUCLEOTIDE SEQUENCE [LARGE SCALE GENOMIC DNA]</scope>
    <source>
        <strain>CDC 1551 / Oshkosh</strain>
    </source>
</reference>
<evidence type="ECO:0000255" key="1"/>
<evidence type="ECO:0000305" key="2"/>
<accession>P9WKP2</accession>
<accession>L0T6S3</accession>
<accession>P64759</accession>
<accession>Q10562</accession>
<comment type="similarity">
    <text evidence="2">To K.pneumoniae RomA.</text>
</comment>
<organism>
    <name type="scientific">Mycobacterium tuberculosis (strain CDC 1551 / Oshkosh)</name>
    <dbReference type="NCBI Taxonomy" id="83331"/>
    <lineage>
        <taxon>Bacteria</taxon>
        <taxon>Bacillati</taxon>
        <taxon>Actinomycetota</taxon>
        <taxon>Actinomycetes</taxon>
        <taxon>Mycobacteriales</taxon>
        <taxon>Mycobacteriaceae</taxon>
        <taxon>Mycobacterium</taxon>
        <taxon>Mycobacterium tuberculosis complex</taxon>
    </lineage>
</organism>
<protein>
    <recommendedName>
        <fullName>Uncharacterized protein MT0929</fullName>
    </recommendedName>
</protein>
<proteinExistence type="inferred from homology"/>
<feature type="signal peptide" evidence="1">
    <location>
        <begin position="1"/>
        <end position="33"/>
    </location>
</feature>
<feature type="chain" id="PRO_0000427619" description="Uncharacterized protein MT0929">
    <location>
        <begin position="34"/>
        <end position="372"/>
    </location>
</feature>